<proteinExistence type="predicted"/>
<keyword id="KW-1003">Cell membrane</keyword>
<keyword id="KW-0378">Hydrolase</keyword>
<keyword id="KW-0472">Membrane</keyword>
<keyword id="KW-0479">Metal-binding</keyword>
<keyword id="KW-0482">Metalloprotease</keyword>
<keyword id="KW-0645">Protease</keyword>
<keyword id="KW-1185">Reference proteome</keyword>
<keyword id="KW-0812">Transmembrane</keyword>
<keyword id="KW-1133">Transmembrane helix</keyword>
<keyword id="KW-0862">Zinc</keyword>
<feature type="chain" id="PRO_0000390302" description="Putative membrane protease YugP">
    <location>
        <begin position="1"/>
        <end position="225"/>
    </location>
</feature>
<feature type="transmembrane region" description="Helical" evidence="1">
    <location>
        <begin position="116"/>
        <end position="138"/>
    </location>
</feature>
<feature type="transmembrane region" description="Helical" evidence="1">
    <location>
        <begin position="140"/>
        <end position="162"/>
    </location>
</feature>
<feature type="transmembrane region" description="Helical" evidence="1">
    <location>
        <begin position="192"/>
        <end position="212"/>
    </location>
</feature>
<feature type="active site" evidence="2">
    <location>
        <position position="96"/>
    </location>
</feature>
<feature type="binding site" evidence="2">
    <location>
        <position position="95"/>
    </location>
    <ligand>
        <name>Zn(2+)</name>
        <dbReference type="ChEBI" id="CHEBI:29105"/>
        <note>catalytic</note>
    </ligand>
</feature>
<feature type="binding site" evidence="2">
    <location>
        <position position="99"/>
    </location>
    <ligand>
        <name>Zn(2+)</name>
        <dbReference type="ChEBI" id="CHEBI:29105"/>
        <note>catalytic</note>
    </ligand>
</feature>
<feature type="binding site" evidence="2">
    <location>
        <position position="103"/>
    </location>
    <ligand>
        <name>Zn(2+)</name>
        <dbReference type="ChEBI" id="CHEBI:29105"/>
        <note>catalytic</note>
    </ligand>
</feature>
<organism>
    <name type="scientific">Bacillus subtilis (strain 168)</name>
    <dbReference type="NCBI Taxonomy" id="224308"/>
    <lineage>
        <taxon>Bacteria</taxon>
        <taxon>Bacillati</taxon>
        <taxon>Bacillota</taxon>
        <taxon>Bacilli</taxon>
        <taxon>Bacillales</taxon>
        <taxon>Bacillaceae</taxon>
        <taxon>Bacillus</taxon>
    </lineage>
</organism>
<protein>
    <recommendedName>
        <fullName>Putative membrane protease YugP</fullName>
        <ecNumber>3.4.24.-</ecNumber>
    </recommendedName>
</protein>
<gene>
    <name type="primary">yugP</name>
    <name type="ordered locus">BSU31310</name>
</gene>
<name>YUGP_BACSU</name>
<sequence length="225" mass="24695">MLFIFLTIAALGLSFWAQFKVKSNFEKYSKVEASSGRTGAETARRILDINGLYDVPVEPVRGTLTDHYDPTRRVVRLSEPVYYGRSISAISVASHEVGHALQHQESYGALVLRHKIFPVVNFASGVAPLLFLGGMLLGSLNLIGLGIILFSAAVFFQLITLPVEFNASSRAKQIIVSEGFIRNNEENGVNKVLSAAALTYVAAALVSLFELLRFVMIFLNGRDEN</sequence>
<evidence type="ECO:0000255" key="1"/>
<evidence type="ECO:0000255" key="2">
    <source>
        <dbReference type="PROSITE-ProRule" id="PRU10095"/>
    </source>
</evidence>
<evidence type="ECO:0000305" key="3"/>
<comment type="subcellular location">
    <subcellularLocation>
        <location evidence="3">Cell membrane</location>
        <topology evidence="3">Multi-pass membrane protein</topology>
    </subcellularLocation>
</comment>
<reference key="1">
    <citation type="journal article" date="1997" name="Microbiology">
        <title>Analysis of the Bacillus subtilis genome: cloning and nucleotide sequence of a 62 kb region between 275 degrees (rrnB) and 284 degrees (pai).</title>
        <authorList>
            <person name="Oudega B."/>
            <person name="Koningstein G."/>
            <person name="Rodrigues L."/>
            <person name="de Sales Ramon M."/>
            <person name="Hilbert H."/>
            <person name="Duesterhoeft A."/>
            <person name="Pohl T.M."/>
            <person name="Weitzenegger T."/>
        </authorList>
    </citation>
    <scope>NUCLEOTIDE SEQUENCE [GENOMIC DNA]</scope>
    <source>
        <strain>168</strain>
    </source>
</reference>
<reference key="2">
    <citation type="journal article" date="1997" name="Nature">
        <title>The complete genome sequence of the Gram-positive bacterium Bacillus subtilis.</title>
        <authorList>
            <person name="Kunst F."/>
            <person name="Ogasawara N."/>
            <person name="Moszer I."/>
            <person name="Albertini A.M."/>
            <person name="Alloni G."/>
            <person name="Azevedo V."/>
            <person name="Bertero M.G."/>
            <person name="Bessieres P."/>
            <person name="Bolotin A."/>
            <person name="Borchert S."/>
            <person name="Borriss R."/>
            <person name="Boursier L."/>
            <person name="Brans A."/>
            <person name="Braun M."/>
            <person name="Brignell S.C."/>
            <person name="Bron S."/>
            <person name="Brouillet S."/>
            <person name="Bruschi C.V."/>
            <person name="Caldwell B."/>
            <person name="Capuano V."/>
            <person name="Carter N.M."/>
            <person name="Choi S.-K."/>
            <person name="Codani J.-J."/>
            <person name="Connerton I.F."/>
            <person name="Cummings N.J."/>
            <person name="Daniel R.A."/>
            <person name="Denizot F."/>
            <person name="Devine K.M."/>
            <person name="Duesterhoeft A."/>
            <person name="Ehrlich S.D."/>
            <person name="Emmerson P.T."/>
            <person name="Entian K.-D."/>
            <person name="Errington J."/>
            <person name="Fabret C."/>
            <person name="Ferrari E."/>
            <person name="Foulger D."/>
            <person name="Fritz C."/>
            <person name="Fujita M."/>
            <person name="Fujita Y."/>
            <person name="Fuma S."/>
            <person name="Galizzi A."/>
            <person name="Galleron N."/>
            <person name="Ghim S.-Y."/>
            <person name="Glaser P."/>
            <person name="Goffeau A."/>
            <person name="Golightly E.J."/>
            <person name="Grandi G."/>
            <person name="Guiseppi G."/>
            <person name="Guy B.J."/>
            <person name="Haga K."/>
            <person name="Haiech J."/>
            <person name="Harwood C.R."/>
            <person name="Henaut A."/>
            <person name="Hilbert H."/>
            <person name="Holsappel S."/>
            <person name="Hosono S."/>
            <person name="Hullo M.-F."/>
            <person name="Itaya M."/>
            <person name="Jones L.-M."/>
            <person name="Joris B."/>
            <person name="Karamata D."/>
            <person name="Kasahara Y."/>
            <person name="Klaerr-Blanchard M."/>
            <person name="Klein C."/>
            <person name="Kobayashi Y."/>
            <person name="Koetter P."/>
            <person name="Koningstein G."/>
            <person name="Krogh S."/>
            <person name="Kumano M."/>
            <person name="Kurita K."/>
            <person name="Lapidus A."/>
            <person name="Lardinois S."/>
            <person name="Lauber J."/>
            <person name="Lazarevic V."/>
            <person name="Lee S.-M."/>
            <person name="Levine A."/>
            <person name="Liu H."/>
            <person name="Masuda S."/>
            <person name="Mauel C."/>
            <person name="Medigue C."/>
            <person name="Medina N."/>
            <person name="Mellado R.P."/>
            <person name="Mizuno M."/>
            <person name="Moestl D."/>
            <person name="Nakai S."/>
            <person name="Noback M."/>
            <person name="Noone D."/>
            <person name="O'Reilly M."/>
            <person name="Ogawa K."/>
            <person name="Ogiwara A."/>
            <person name="Oudega B."/>
            <person name="Park S.-H."/>
            <person name="Parro V."/>
            <person name="Pohl T.M."/>
            <person name="Portetelle D."/>
            <person name="Porwollik S."/>
            <person name="Prescott A.M."/>
            <person name="Presecan E."/>
            <person name="Pujic P."/>
            <person name="Purnelle B."/>
            <person name="Rapoport G."/>
            <person name="Rey M."/>
            <person name="Reynolds S."/>
            <person name="Rieger M."/>
            <person name="Rivolta C."/>
            <person name="Rocha E."/>
            <person name="Roche B."/>
            <person name="Rose M."/>
            <person name="Sadaie Y."/>
            <person name="Sato T."/>
            <person name="Scanlan E."/>
            <person name="Schleich S."/>
            <person name="Schroeter R."/>
            <person name="Scoffone F."/>
            <person name="Sekiguchi J."/>
            <person name="Sekowska A."/>
            <person name="Seror S.J."/>
            <person name="Serror P."/>
            <person name="Shin B.-S."/>
            <person name="Soldo B."/>
            <person name="Sorokin A."/>
            <person name="Tacconi E."/>
            <person name="Takagi T."/>
            <person name="Takahashi H."/>
            <person name="Takemaru K."/>
            <person name="Takeuchi M."/>
            <person name="Tamakoshi A."/>
            <person name="Tanaka T."/>
            <person name="Terpstra P."/>
            <person name="Tognoni A."/>
            <person name="Tosato V."/>
            <person name="Uchiyama S."/>
            <person name="Vandenbol M."/>
            <person name="Vannier F."/>
            <person name="Vassarotti A."/>
            <person name="Viari A."/>
            <person name="Wambutt R."/>
            <person name="Wedler E."/>
            <person name="Wedler H."/>
            <person name="Weitzenegger T."/>
            <person name="Winters P."/>
            <person name="Wipat A."/>
            <person name="Yamamoto H."/>
            <person name="Yamane K."/>
            <person name="Yasumoto K."/>
            <person name="Yata K."/>
            <person name="Yoshida K."/>
            <person name="Yoshikawa H.-F."/>
            <person name="Zumstein E."/>
            <person name="Yoshikawa H."/>
            <person name="Danchin A."/>
        </authorList>
    </citation>
    <scope>NUCLEOTIDE SEQUENCE [LARGE SCALE GENOMIC DNA]</scope>
    <source>
        <strain>168</strain>
    </source>
</reference>
<accession>O05248</accession>
<accession>Q795M9</accession>
<dbReference type="EC" id="3.4.24.-"/>
<dbReference type="EMBL" id="Z93936">
    <property type="protein sequence ID" value="CAB07934.1"/>
    <property type="molecule type" value="Genomic_DNA"/>
</dbReference>
<dbReference type="EMBL" id="AL009126">
    <property type="protein sequence ID" value="CAB15120.1"/>
    <property type="molecule type" value="Genomic_DNA"/>
</dbReference>
<dbReference type="PIR" id="F70011">
    <property type="entry name" value="F70011"/>
</dbReference>
<dbReference type="RefSeq" id="NP_391009.1">
    <property type="nucleotide sequence ID" value="NC_000964.3"/>
</dbReference>
<dbReference type="RefSeq" id="WP_003228889.1">
    <property type="nucleotide sequence ID" value="NZ_OZ025638.1"/>
</dbReference>
<dbReference type="FunCoup" id="O05248">
    <property type="interactions" value="10"/>
</dbReference>
<dbReference type="STRING" id="224308.BSU31310"/>
<dbReference type="PaxDb" id="224308-BSU31310"/>
<dbReference type="DNASU" id="938850"/>
<dbReference type="EnsemblBacteria" id="CAB15120">
    <property type="protein sequence ID" value="CAB15120"/>
    <property type="gene ID" value="BSU_31310"/>
</dbReference>
<dbReference type="GeneID" id="938850"/>
<dbReference type="KEGG" id="bsu:BSU31310"/>
<dbReference type="PATRIC" id="fig|224308.179.peg.3393"/>
<dbReference type="eggNOG" id="COG2738">
    <property type="taxonomic scope" value="Bacteria"/>
</dbReference>
<dbReference type="InParanoid" id="O05248"/>
<dbReference type="OrthoDB" id="9784298at2"/>
<dbReference type="PhylomeDB" id="O05248"/>
<dbReference type="BioCyc" id="BSUB:BSU31310-MONOMER"/>
<dbReference type="Proteomes" id="UP000001570">
    <property type="component" value="Chromosome"/>
</dbReference>
<dbReference type="GO" id="GO:0005886">
    <property type="term" value="C:plasma membrane"/>
    <property type="evidence" value="ECO:0007669"/>
    <property type="project" value="UniProtKB-SubCell"/>
</dbReference>
<dbReference type="GO" id="GO:0046872">
    <property type="term" value="F:metal ion binding"/>
    <property type="evidence" value="ECO:0007669"/>
    <property type="project" value="UniProtKB-KW"/>
</dbReference>
<dbReference type="GO" id="GO:0008237">
    <property type="term" value="F:metallopeptidase activity"/>
    <property type="evidence" value="ECO:0007669"/>
    <property type="project" value="UniProtKB-KW"/>
</dbReference>
<dbReference type="GO" id="GO:0006508">
    <property type="term" value="P:proteolysis"/>
    <property type="evidence" value="ECO:0007669"/>
    <property type="project" value="UniProtKB-KW"/>
</dbReference>
<dbReference type="InterPro" id="IPR007395">
    <property type="entry name" value="Zn_peptidase_2"/>
</dbReference>
<dbReference type="PANTHER" id="PTHR36434">
    <property type="entry name" value="MEMBRANE PROTEASE YUGP-RELATED"/>
    <property type="match status" value="1"/>
</dbReference>
<dbReference type="PANTHER" id="PTHR36434:SF1">
    <property type="entry name" value="MEMBRANE PROTEASE YUGP-RELATED"/>
    <property type="match status" value="1"/>
</dbReference>
<dbReference type="Pfam" id="PF04298">
    <property type="entry name" value="Zn_peptidase_2"/>
    <property type="match status" value="1"/>
</dbReference>
<dbReference type="PROSITE" id="PS00142">
    <property type="entry name" value="ZINC_PROTEASE"/>
    <property type="match status" value="1"/>
</dbReference>